<protein>
    <recommendedName>
        <fullName evidence="1">Oxygen-dependent coproporphyrinogen-III oxidase</fullName>
        <shortName evidence="1">CPO</shortName>
        <shortName evidence="1">Coprogen oxidase</shortName>
        <shortName evidence="1">Coproporphyrinogenase</shortName>
        <ecNumber evidence="1">1.3.3.3</ecNumber>
    </recommendedName>
</protein>
<sequence>MKPDAHHVKQFLLRLQDDICQTLSAVDGANFVEDSWRREAGGGGRSRVLRNGGIFEQAGVNFSHVHGDAMPASATAHRPELAGRSFEAMGVSLVVHPHNPYIPTSHANVRFFIAEKPGADPVWWFGGGFDLTPYYGFEEDAVHWHRTARDLCQPFGDDVYPRYKKWCDDYFFLKHRNEQRGVGGLFFDDLNTPDFDHCFDFMQAVGNGYTRAYLPIVERRKAMVWGERERNFQLYRRGRYVEFNLVWDRGTLFGLQTGGRTESILMSMPPLVRWEYDWQPEAGSPEAALSEFIQVRDWI</sequence>
<keyword id="KW-0963">Cytoplasm</keyword>
<keyword id="KW-0350">Heme biosynthesis</keyword>
<keyword id="KW-0479">Metal-binding</keyword>
<keyword id="KW-0560">Oxidoreductase</keyword>
<keyword id="KW-0627">Porphyrin biosynthesis</keyword>
<keyword id="KW-1185">Reference proteome</keyword>
<organism>
    <name type="scientific">Salmonella typhimurium (strain LT2 / SGSC1412 / ATCC 700720)</name>
    <dbReference type="NCBI Taxonomy" id="99287"/>
    <lineage>
        <taxon>Bacteria</taxon>
        <taxon>Pseudomonadati</taxon>
        <taxon>Pseudomonadota</taxon>
        <taxon>Gammaproteobacteria</taxon>
        <taxon>Enterobacterales</taxon>
        <taxon>Enterobacteriaceae</taxon>
        <taxon>Salmonella</taxon>
    </lineage>
</organism>
<comment type="function">
    <text evidence="1">Involved in the heme biosynthesis. Catalyzes the aerobic oxidative decarboxylation of propionate groups of rings A and B of coproporphyrinogen-III to yield the vinyl groups in protoporphyrinogen-IX.</text>
</comment>
<comment type="catalytic activity">
    <reaction evidence="1">
        <text>coproporphyrinogen III + O2 + 2 H(+) = protoporphyrinogen IX + 2 CO2 + 2 H2O</text>
        <dbReference type="Rhea" id="RHEA:18257"/>
        <dbReference type="ChEBI" id="CHEBI:15377"/>
        <dbReference type="ChEBI" id="CHEBI:15378"/>
        <dbReference type="ChEBI" id="CHEBI:15379"/>
        <dbReference type="ChEBI" id="CHEBI:16526"/>
        <dbReference type="ChEBI" id="CHEBI:57307"/>
        <dbReference type="ChEBI" id="CHEBI:57309"/>
        <dbReference type="EC" id="1.3.3.3"/>
    </reaction>
</comment>
<comment type="cofactor">
    <cofactor evidence="1">
        <name>a divalent metal cation</name>
        <dbReference type="ChEBI" id="CHEBI:60240"/>
    </cofactor>
</comment>
<comment type="pathway">
    <text evidence="1">Porphyrin-containing compound metabolism; protoporphyrin-IX biosynthesis; protoporphyrinogen-IX from coproporphyrinogen-III (O2 route): step 1/1.</text>
</comment>
<comment type="subunit">
    <text evidence="1">Homodimer.</text>
</comment>
<comment type="subcellular location">
    <subcellularLocation>
        <location>Cytoplasm</location>
    </subcellularLocation>
</comment>
<comment type="similarity">
    <text evidence="1">Belongs to the aerobic coproporphyrinogen-III oxidase family.</text>
</comment>
<accession>P33771</accession>
<feature type="chain" id="PRO_0000109919" description="Oxygen-dependent coproporphyrinogen-III oxidase">
    <location>
        <begin position="1"/>
        <end position="299"/>
    </location>
</feature>
<feature type="region of interest" description="Important for dimerization" evidence="1">
    <location>
        <begin position="240"/>
        <end position="275"/>
    </location>
</feature>
<feature type="active site" description="Proton donor" evidence="1">
    <location>
        <position position="106"/>
    </location>
</feature>
<feature type="binding site" evidence="1">
    <location>
        <position position="92"/>
    </location>
    <ligand>
        <name>substrate</name>
    </ligand>
</feature>
<feature type="binding site" evidence="1">
    <location>
        <position position="96"/>
    </location>
    <ligand>
        <name>a divalent metal cation</name>
        <dbReference type="ChEBI" id="CHEBI:60240"/>
    </ligand>
</feature>
<feature type="binding site" evidence="1">
    <location>
        <position position="106"/>
    </location>
    <ligand>
        <name>a divalent metal cation</name>
        <dbReference type="ChEBI" id="CHEBI:60240"/>
    </ligand>
</feature>
<feature type="binding site" evidence="1">
    <location>
        <begin position="108"/>
        <end position="110"/>
    </location>
    <ligand>
        <name>substrate</name>
    </ligand>
</feature>
<feature type="binding site" evidence="1">
    <location>
        <position position="145"/>
    </location>
    <ligand>
        <name>a divalent metal cation</name>
        <dbReference type="ChEBI" id="CHEBI:60240"/>
    </ligand>
</feature>
<feature type="binding site" evidence="1">
    <location>
        <position position="175"/>
    </location>
    <ligand>
        <name>a divalent metal cation</name>
        <dbReference type="ChEBI" id="CHEBI:60240"/>
    </ligand>
</feature>
<feature type="binding site" evidence="1">
    <location>
        <begin position="258"/>
        <end position="260"/>
    </location>
    <ligand>
        <name>substrate</name>
    </ligand>
</feature>
<feature type="site" description="Important for dimerization" evidence="1">
    <location>
        <position position="175"/>
    </location>
</feature>
<proteinExistence type="inferred from homology"/>
<name>HEM6_SALTY</name>
<gene>
    <name evidence="1" type="primary">hemF</name>
    <name type="ordered locus">STM2451</name>
</gene>
<evidence type="ECO:0000255" key="1">
    <source>
        <dbReference type="HAMAP-Rule" id="MF_00333"/>
    </source>
</evidence>
<dbReference type="EC" id="1.3.3.3" evidence="1"/>
<dbReference type="EMBL" id="L19503">
    <property type="protein sequence ID" value="AAA27139.1"/>
    <property type="molecule type" value="Genomic_DNA"/>
</dbReference>
<dbReference type="EMBL" id="AE006468">
    <property type="protein sequence ID" value="AAL21345.1"/>
    <property type="molecule type" value="Genomic_DNA"/>
</dbReference>
<dbReference type="PIR" id="B53302">
    <property type="entry name" value="B53302"/>
</dbReference>
<dbReference type="RefSeq" id="NP_461386.1">
    <property type="nucleotide sequence ID" value="NC_003197.2"/>
</dbReference>
<dbReference type="RefSeq" id="WP_000801350.1">
    <property type="nucleotide sequence ID" value="NC_003197.2"/>
</dbReference>
<dbReference type="SMR" id="P33771"/>
<dbReference type="STRING" id="99287.STM2451"/>
<dbReference type="PaxDb" id="99287-STM2451"/>
<dbReference type="GeneID" id="1253973"/>
<dbReference type="KEGG" id="stm:STM2451"/>
<dbReference type="PATRIC" id="fig|99287.12.peg.2589"/>
<dbReference type="HOGENOM" id="CLU_026169_0_1_6"/>
<dbReference type="OMA" id="VHANWRY"/>
<dbReference type="PhylomeDB" id="P33771"/>
<dbReference type="BioCyc" id="SENT99287:STM2451-MONOMER"/>
<dbReference type="UniPathway" id="UPA00251">
    <property type="reaction ID" value="UER00322"/>
</dbReference>
<dbReference type="Proteomes" id="UP000001014">
    <property type="component" value="Chromosome"/>
</dbReference>
<dbReference type="GO" id="GO:0005737">
    <property type="term" value="C:cytoplasm"/>
    <property type="evidence" value="ECO:0000318"/>
    <property type="project" value="GO_Central"/>
</dbReference>
<dbReference type="GO" id="GO:0004109">
    <property type="term" value="F:coproporphyrinogen oxidase activity"/>
    <property type="evidence" value="ECO:0000318"/>
    <property type="project" value="GO_Central"/>
</dbReference>
<dbReference type="GO" id="GO:0046872">
    <property type="term" value="F:metal ion binding"/>
    <property type="evidence" value="ECO:0007669"/>
    <property type="project" value="UniProtKB-KW"/>
</dbReference>
<dbReference type="GO" id="GO:0042803">
    <property type="term" value="F:protein homodimerization activity"/>
    <property type="evidence" value="ECO:0000250"/>
    <property type="project" value="UniProtKB"/>
</dbReference>
<dbReference type="GO" id="GO:0006782">
    <property type="term" value="P:protoporphyrinogen IX biosynthetic process"/>
    <property type="evidence" value="ECO:0000318"/>
    <property type="project" value="GO_Central"/>
</dbReference>
<dbReference type="FunFam" id="3.40.1500.10:FF:000001">
    <property type="entry name" value="Oxygen-dependent coproporphyrinogen-III oxidase"/>
    <property type="match status" value="1"/>
</dbReference>
<dbReference type="Gene3D" id="3.40.1500.10">
    <property type="entry name" value="Coproporphyrinogen III oxidase, aerobic"/>
    <property type="match status" value="1"/>
</dbReference>
<dbReference type="HAMAP" id="MF_00333">
    <property type="entry name" value="Coprogen_oxidas"/>
    <property type="match status" value="1"/>
</dbReference>
<dbReference type="InterPro" id="IPR001260">
    <property type="entry name" value="Coprogen_oxidase_aer"/>
</dbReference>
<dbReference type="InterPro" id="IPR036406">
    <property type="entry name" value="Coprogen_oxidase_aer_sf"/>
</dbReference>
<dbReference type="InterPro" id="IPR018375">
    <property type="entry name" value="Coprogen_oxidase_CS"/>
</dbReference>
<dbReference type="NCBIfam" id="NF003727">
    <property type="entry name" value="PRK05330.1"/>
    <property type="match status" value="1"/>
</dbReference>
<dbReference type="PANTHER" id="PTHR10755">
    <property type="entry name" value="COPROPORPHYRINOGEN III OXIDASE, MITOCHONDRIAL"/>
    <property type="match status" value="1"/>
</dbReference>
<dbReference type="PANTHER" id="PTHR10755:SF0">
    <property type="entry name" value="OXYGEN-DEPENDENT COPROPORPHYRINOGEN-III OXIDASE, MITOCHONDRIAL"/>
    <property type="match status" value="1"/>
</dbReference>
<dbReference type="Pfam" id="PF01218">
    <property type="entry name" value="Coprogen_oxidas"/>
    <property type="match status" value="1"/>
</dbReference>
<dbReference type="PIRSF" id="PIRSF000166">
    <property type="entry name" value="Coproporphyri_ox"/>
    <property type="match status" value="1"/>
</dbReference>
<dbReference type="PRINTS" id="PR00073">
    <property type="entry name" value="COPRGNOXDASE"/>
</dbReference>
<dbReference type="SUPFAM" id="SSF102886">
    <property type="entry name" value="Coproporphyrinogen III oxidase"/>
    <property type="match status" value="1"/>
</dbReference>
<dbReference type="PROSITE" id="PS01021">
    <property type="entry name" value="COPROGEN_OXIDASE"/>
    <property type="match status" value="1"/>
</dbReference>
<reference key="1">
    <citation type="journal article" date="1993" name="J. Bacteriol.">
        <title>An oxygen-dependent coproporphyrinogen oxidase encoded by the hemF gene of Salmonella typhimurium.</title>
        <authorList>
            <person name="Xu K."/>
            <person name="Elliott T."/>
        </authorList>
    </citation>
    <scope>NUCLEOTIDE SEQUENCE [GENOMIC DNA]</scope>
    <source>
        <strain>LT2 / SGSC1412 / ATCC 700720</strain>
    </source>
</reference>
<reference key="2">
    <citation type="journal article" date="2001" name="Nature">
        <title>Complete genome sequence of Salmonella enterica serovar Typhimurium LT2.</title>
        <authorList>
            <person name="McClelland M."/>
            <person name="Sanderson K.E."/>
            <person name="Spieth J."/>
            <person name="Clifton S.W."/>
            <person name="Latreille P."/>
            <person name="Courtney L."/>
            <person name="Porwollik S."/>
            <person name="Ali J."/>
            <person name="Dante M."/>
            <person name="Du F."/>
            <person name="Hou S."/>
            <person name="Layman D."/>
            <person name="Leonard S."/>
            <person name="Nguyen C."/>
            <person name="Scott K."/>
            <person name="Holmes A."/>
            <person name="Grewal N."/>
            <person name="Mulvaney E."/>
            <person name="Ryan E."/>
            <person name="Sun H."/>
            <person name="Florea L."/>
            <person name="Miller W."/>
            <person name="Stoneking T."/>
            <person name="Nhan M."/>
            <person name="Waterston R."/>
            <person name="Wilson R.K."/>
        </authorList>
    </citation>
    <scope>NUCLEOTIDE SEQUENCE [LARGE SCALE GENOMIC DNA]</scope>
    <source>
        <strain>LT2 / SGSC1412 / ATCC 700720</strain>
    </source>
</reference>